<name>CCR4_PHANO</name>
<proteinExistence type="inferred from homology"/>
<organism>
    <name type="scientific">Phaeosphaeria nodorum (strain SN15 / ATCC MYA-4574 / FGSC 10173)</name>
    <name type="common">Glume blotch fungus</name>
    <name type="synonym">Parastagonospora nodorum</name>
    <dbReference type="NCBI Taxonomy" id="321614"/>
    <lineage>
        <taxon>Eukaryota</taxon>
        <taxon>Fungi</taxon>
        <taxon>Dikarya</taxon>
        <taxon>Ascomycota</taxon>
        <taxon>Pezizomycotina</taxon>
        <taxon>Dothideomycetes</taxon>
        <taxon>Pleosporomycetidae</taxon>
        <taxon>Pleosporales</taxon>
        <taxon>Pleosporineae</taxon>
        <taxon>Phaeosphaeriaceae</taxon>
        <taxon>Parastagonospora</taxon>
    </lineage>
</organism>
<comment type="function">
    <text evidence="3">Acts as a catalytic component of the CCR4-NOT core complex, which in the nucleus seems to be a general transcription factor, and in the cytoplasm the major mRNA deadenylase involved in mRNA turnover (By similarity). Ccr4 has 3'-5' RNase activity with a strong preference for polyadenylated substrates and also low exonuclease activity towards single-stranded DNA (By similarity).</text>
</comment>
<comment type="catalytic activity">
    <reaction>
        <text>Exonucleolytic cleavage of poly(A) to 5'-AMP.</text>
        <dbReference type="EC" id="3.1.13.4"/>
    </reaction>
</comment>
<comment type="cofactor">
    <cofactor evidence="1">
        <name>Mg(2+)</name>
        <dbReference type="ChEBI" id="CHEBI:18420"/>
    </cofactor>
</comment>
<comment type="subcellular location">
    <subcellularLocation>
        <location evidence="1">Cytoplasm</location>
    </subcellularLocation>
    <subcellularLocation>
        <location evidence="1">Nucleus</location>
    </subcellularLocation>
</comment>
<comment type="similarity">
    <text evidence="5">Belongs to the CCR4/nocturin family.</text>
</comment>
<accession>Q0U7W4</accession>
<feature type="chain" id="PRO_0000290616" description="CCR4-Not complex 3'-5'-exoribonuclease subunit Ccr4">
    <location>
        <begin position="1"/>
        <end position="597"/>
    </location>
</feature>
<feature type="repeat" description="LRR 1">
    <location>
        <begin position="66"/>
        <end position="89"/>
    </location>
</feature>
<feature type="repeat" description="LRR 2">
    <location>
        <begin position="92"/>
        <end position="113"/>
    </location>
</feature>
<feature type="repeat" description="LRR 3">
    <location>
        <begin position="115"/>
        <end position="136"/>
    </location>
</feature>
<feature type="repeat" description="LRR 4">
    <location>
        <begin position="138"/>
        <end position="159"/>
    </location>
</feature>
<feature type="repeat" description="LRR 5">
    <location>
        <begin position="161"/>
        <end position="183"/>
    </location>
</feature>
<feature type="region of interest" description="Disordered" evidence="4">
    <location>
        <begin position="1"/>
        <end position="69"/>
    </location>
</feature>
<feature type="compositionally biased region" description="Polar residues" evidence="4">
    <location>
        <begin position="12"/>
        <end position="28"/>
    </location>
</feature>
<feature type="compositionally biased region" description="Basic and acidic residues" evidence="4">
    <location>
        <begin position="29"/>
        <end position="45"/>
    </location>
</feature>
<feature type="compositionally biased region" description="Polar residues" evidence="4">
    <location>
        <begin position="51"/>
        <end position="69"/>
    </location>
</feature>
<feature type="binding site" evidence="2">
    <location>
        <position position="272"/>
    </location>
    <ligand>
        <name>Mg(2+)</name>
        <dbReference type="ChEBI" id="CHEBI:18420"/>
    </ligand>
</feature>
<reference key="1">
    <citation type="journal article" date="2007" name="Plant Cell">
        <title>Dothideomycete-plant interactions illuminated by genome sequencing and EST analysis of the wheat pathogen Stagonospora nodorum.</title>
        <authorList>
            <person name="Hane J.K."/>
            <person name="Lowe R.G.T."/>
            <person name="Solomon P.S."/>
            <person name="Tan K.-C."/>
            <person name="Schoch C.L."/>
            <person name="Spatafora J.W."/>
            <person name="Crous P.W."/>
            <person name="Kodira C.D."/>
            <person name="Birren B.W."/>
            <person name="Galagan J.E."/>
            <person name="Torriani S.F.F."/>
            <person name="McDonald B.A."/>
            <person name="Oliver R.P."/>
        </authorList>
    </citation>
    <scope>NUCLEOTIDE SEQUENCE [LARGE SCALE GENOMIC DNA]</scope>
    <source>
        <strain>SN15 / ATCC MYA-4574 / FGSC 10173</strain>
    </source>
</reference>
<evidence type="ECO:0000250" key="1"/>
<evidence type="ECO:0000250" key="2">
    <source>
        <dbReference type="UniProtKB" id="O95551"/>
    </source>
</evidence>
<evidence type="ECO:0000250" key="3">
    <source>
        <dbReference type="UniProtKB" id="P31384"/>
    </source>
</evidence>
<evidence type="ECO:0000256" key="4">
    <source>
        <dbReference type="SAM" id="MobiDB-lite"/>
    </source>
</evidence>
<evidence type="ECO:0000305" key="5"/>
<sequence>MSNAQPHFAPSHLQNGTPNSVHSGVNRPTTEHWAEQRTRSADSTKRRTRKSATGQQHSEPRTARTTSRGQYVDFGGQNLKVITPTLFINYSFLTKLYLNANKLTYLHQAIGQLRNLTHLDLSLNNLHSLPPEIGMLVNLKQLLVFDNQLTDLPEELGSLYQLELLGIEGNPIPDDIKQIMMEQGTVELIKHFRETAAGPEAPPERDWIVLDEITDPAQETVTALSYNILCDKYCTQSQYGYTPSSALAWETRRELILGELKQRNADIVCLQEIDQDSFNEYFREKLAHYDYKGVFWPKSRARTMAEREAKLVDGCAIFYKNSKYVLLDKQLIDFANTAINRPDMKGEHDIFNRVMPRDDIGVVAFLENRATGSRFIVGNVHVFWNPAFTDVKLVQVAILMEGISKFATKWSKFPPCKDKVVYRFTNGDDEDGKEADTTQEPGPSKEYGAGADIPVILCGDFNSMPSSGVYDLITQGTIAHSHQDLGSRKYGNFTRDGISHPFSLKSSYSAIGEMTFTNYVPHFQGVLDYIWYSTNTLQVVGLLGDIDKEYLRRVPGFPNYHFPSDHVALYAQYIVKGRKEKKVSEVDFGPSRDRERR</sequence>
<gene>
    <name type="primary">CCR4</name>
    <name type="ORF">SNOG_12150</name>
</gene>
<dbReference type="EC" id="3.1.13.4"/>
<dbReference type="EMBL" id="CH445345">
    <property type="protein sequence ID" value="EAT80562.2"/>
    <property type="molecule type" value="Genomic_DNA"/>
</dbReference>
<dbReference type="RefSeq" id="XP_001802381.1">
    <property type="nucleotide sequence ID" value="XM_001802329.1"/>
</dbReference>
<dbReference type="SMR" id="Q0U7W4"/>
<dbReference type="FunCoup" id="Q0U7W4">
    <property type="interactions" value="420"/>
</dbReference>
<dbReference type="STRING" id="321614.Q0U7W4"/>
<dbReference type="EnsemblFungi" id="SNOT_12150">
    <property type="protein sequence ID" value="SNOT_12150"/>
    <property type="gene ID" value="SNOG_12150"/>
</dbReference>
<dbReference type="GeneID" id="5979291"/>
<dbReference type="KEGG" id="pno:SNOG_12150"/>
<dbReference type="VEuPathDB" id="FungiDB:JI435_121500"/>
<dbReference type="eggNOG" id="KOG0620">
    <property type="taxonomic scope" value="Eukaryota"/>
</dbReference>
<dbReference type="HOGENOM" id="CLU_016428_4_0_1"/>
<dbReference type="InParanoid" id="Q0U7W4"/>
<dbReference type="Proteomes" id="UP000001055">
    <property type="component" value="Unassembled WGS sequence"/>
</dbReference>
<dbReference type="GO" id="GO:0030015">
    <property type="term" value="C:CCR4-NOT core complex"/>
    <property type="evidence" value="ECO:0007669"/>
    <property type="project" value="EnsemblFungi"/>
</dbReference>
<dbReference type="GO" id="GO:0005634">
    <property type="term" value="C:nucleus"/>
    <property type="evidence" value="ECO:0007669"/>
    <property type="project" value="UniProtKB-SubCell"/>
</dbReference>
<dbReference type="GO" id="GO:0000932">
    <property type="term" value="C:P-body"/>
    <property type="evidence" value="ECO:0007669"/>
    <property type="project" value="EnsemblFungi"/>
</dbReference>
<dbReference type="GO" id="GO:0000175">
    <property type="term" value="F:3'-5'-RNA exonuclease activity"/>
    <property type="evidence" value="ECO:0000318"/>
    <property type="project" value="GO_Central"/>
</dbReference>
<dbReference type="GO" id="GO:0046872">
    <property type="term" value="F:metal ion binding"/>
    <property type="evidence" value="ECO:0007669"/>
    <property type="project" value="UniProtKB-KW"/>
</dbReference>
<dbReference type="GO" id="GO:0004535">
    <property type="term" value="F:poly(A)-specific ribonuclease activity"/>
    <property type="evidence" value="ECO:0007669"/>
    <property type="project" value="UniProtKB-EC"/>
</dbReference>
<dbReference type="GO" id="GO:0003723">
    <property type="term" value="F:RNA binding"/>
    <property type="evidence" value="ECO:0007669"/>
    <property type="project" value="UniProtKB-KW"/>
</dbReference>
<dbReference type="GO" id="GO:0000289">
    <property type="term" value="P:nuclear-transcribed mRNA poly(A) tail shortening"/>
    <property type="evidence" value="ECO:0007669"/>
    <property type="project" value="EnsemblFungi"/>
</dbReference>
<dbReference type="CDD" id="cd09097">
    <property type="entry name" value="Deadenylase_CCR4"/>
    <property type="match status" value="1"/>
</dbReference>
<dbReference type="FunFam" id="3.60.10.10:FF:000037">
    <property type="entry name" value="Glucose-repressible alcohol dehydrogenase transcriptional effector"/>
    <property type="match status" value="1"/>
</dbReference>
<dbReference type="Gene3D" id="3.60.10.10">
    <property type="entry name" value="Endonuclease/exonuclease/phosphatase"/>
    <property type="match status" value="1"/>
</dbReference>
<dbReference type="Gene3D" id="3.80.10.10">
    <property type="entry name" value="Ribonuclease Inhibitor"/>
    <property type="match status" value="1"/>
</dbReference>
<dbReference type="InterPro" id="IPR050410">
    <property type="entry name" value="CCR4/nocturin_mRNA_transcr"/>
</dbReference>
<dbReference type="InterPro" id="IPR036691">
    <property type="entry name" value="Endo/exonu/phosph_ase_sf"/>
</dbReference>
<dbReference type="InterPro" id="IPR005135">
    <property type="entry name" value="Endo/exonuclease/phosphatase"/>
</dbReference>
<dbReference type="InterPro" id="IPR001611">
    <property type="entry name" value="Leu-rich_rpt"/>
</dbReference>
<dbReference type="InterPro" id="IPR003591">
    <property type="entry name" value="Leu-rich_rpt_typical-subtyp"/>
</dbReference>
<dbReference type="InterPro" id="IPR032675">
    <property type="entry name" value="LRR_dom_sf"/>
</dbReference>
<dbReference type="PANTHER" id="PTHR12121">
    <property type="entry name" value="CARBON CATABOLITE REPRESSOR PROTEIN 4"/>
    <property type="match status" value="1"/>
</dbReference>
<dbReference type="PANTHER" id="PTHR12121:SF100">
    <property type="entry name" value="POLY(A)-SPECIFIC RIBONUCLEASE"/>
    <property type="match status" value="1"/>
</dbReference>
<dbReference type="Pfam" id="PF03372">
    <property type="entry name" value="Exo_endo_phos"/>
    <property type="match status" value="2"/>
</dbReference>
<dbReference type="SMART" id="SM00369">
    <property type="entry name" value="LRR_TYP"/>
    <property type="match status" value="2"/>
</dbReference>
<dbReference type="SUPFAM" id="SSF56219">
    <property type="entry name" value="DNase I-like"/>
    <property type="match status" value="1"/>
</dbReference>
<dbReference type="SUPFAM" id="SSF52058">
    <property type="entry name" value="L domain-like"/>
    <property type="match status" value="1"/>
</dbReference>
<dbReference type="PROSITE" id="PS51450">
    <property type="entry name" value="LRR"/>
    <property type="match status" value="3"/>
</dbReference>
<protein>
    <recommendedName>
        <fullName evidence="5">CCR4-Not complex 3'-5'-exoribonuclease subunit Ccr4</fullName>
        <ecNumber>3.1.13.4</ecNumber>
    </recommendedName>
    <alternativeName>
        <fullName>Carbon catabolite repressor protein 4</fullName>
    </alternativeName>
    <alternativeName>
        <fullName>Cytoplasmic deadenylase</fullName>
    </alternativeName>
    <alternativeName>
        <fullName>Glucose-repressible alcohol dehydrogenase transcriptional effector</fullName>
    </alternativeName>
</protein>
<keyword id="KW-0963">Cytoplasm</keyword>
<keyword id="KW-0269">Exonuclease</keyword>
<keyword id="KW-0378">Hydrolase</keyword>
<keyword id="KW-0433">Leucine-rich repeat</keyword>
<keyword id="KW-0460">Magnesium</keyword>
<keyword id="KW-0479">Metal-binding</keyword>
<keyword id="KW-0540">Nuclease</keyword>
<keyword id="KW-0539">Nucleus</keyword>
<keyword id="KW-0677">Repeat</keyword>
<keyword id="KW-0694">RNA-binding</keyword>
<keyword id="KW-0804">Transcription</keyword>
<keyword id="KW-0805">Transcription regulation</keyword>